<feature type="chain" id="PRO_1000131490" description="Phosphatidylserine decarboxylase beta chain" evidence="1">
    <location>
        <begin position="1"/>
        <end position="189"/>
    </location>
</feature>
<feature type="chain" id="PRO_1000131491" description="Phosphatidylserine decarboxylase alpha chain" evidence="1">
    <location>
        <begin position="190"/>
        <end position="232"/>
    </location>
</feature>
<feature type="active site" description="Schiff-base intermediate with substrate; via pyruvic acid" evidence="1">
    <location>
        <position position="190"/>
    </location>
</feature>
<feature type="site" description="Cleavage (non-hydrolytic); by autocatalysis" evidence="1">
    <location>
        <begin position="189"/>
        <end position="190"/>
    </location>
</feature>
<feature type="modified residue" description="Pyruvic acid (Ser); by autocatalysis" evidence="1">
    <location>
        <position position="190"/>
    </location>
</feature>
<dbReference type="EC" id="4.1.1.65" evidence="1"/>
<dbReference type="EMBL" id="CP001096">
    <property type="protein sequence ID" value="ACF00738.1"/>
    <property type="molecule type" value="Genomic_DNA"/>
</dbReference>
<dbReference type="KEGG" id="rpt:Rpal_2217"/>
<dbReference type="HOGENOM" id="CLU_072492_0_0_5"/>
<dbReference type="OrthoDB" id="9790893at2"/>
<dbReference type="UniPathway" id="UPA00558">
    <property type="reaction ID" value="UER00616"/>
</dbReference>
<dbReference type="Proteomes" id="UP000001725">
    <property type="component" value="Chromosome"/>
</dbReference>
<dbReference type="GO" id="GO:0005886">
    <property type="term" value="C:plasma membrane"/>
    <property type="evidence" value="ECO:0007669"/>
    <property type="project" value="UniProtKB-SubCell"/>
</dbReference>
<dbReference type="GO" id="GO:0004609">
    <property type="term" value="F:phosphatidylserine decarboxylase activity"/>
    <property type="evidence" value="ECO:0007669"/>
    <property type="project" value="UniProtKB-UniRule"/>
</dbReference>
<dbReference type="GO" id="GO:0006646">
    <property type="term" value="P:phosphatidylethanolamine biosynthetic process"/>
    <property type="evidence" value="ECO:0007669"/>
    <property type="project" value="UniProtKB-UniRule"/>
</dbReference>
<dbReference type="HAMAP" id="MF_00664">
    <property type="entry name" value="PS_decarb_PSD_A"/>
    <property type="match status" value="1"/>
</dbReference>
<dbReference type="InterPro" id="IPR003817">
    <property type="entry name" value="PS_Dcarbxylase"/>
</dbReference>
<dbReference type="InterPro" id="IPR033175">
    <property type="entry name" value="PSD-A"/>
</dbReference>
<dbReference type="NCBIfam" id="NF003677">
    <property type="entry name" value="PRK05305.1-1"/>
    <property type="match status" value="1"/>
</dbReference>
<dbReference type="NCBIfam" id="NF003678">
    <property type="entry name" value="PRK05305.1-2"/>
    <property type="match status" value="1"/>
</dbReference>
<dbReference type="NCBIfam" id="NF003679">
    <property type="entry name" value="PRK05305.1-3"/>
    <property type="match status" value="1"/>
</dbReference>
<dbReference type="NCBIfam" id="NF003685">
    <property type="entry name" value="PRK05305.2-5"/>
    <property type="match status" value="1"/>
</dbReference>
<dbReference type="PANTHER" id="PTHR35809">
    <property type="entry name" value="ARCHAETIDYLSERINE DECARBOXYLASE PROENZYME-RELATED"/>
    <property type="match status" value="1"/>
</dbReference>
<dbReference type="PANTHER" id="PTHR35809:SF1">
    <property type="entry name" value="ARCHAETIDYLSERINE DECARBOXYLASE PROENZYME-RELATED"/>
    <property type="match status" value="1"/>
</dbReference>
<dbReference type="Pfam" id="PF02666">
    <property type="entry name" value="PS_Dcarbxylase"/>
    <property type="match status" value="1"/>
</dbReference>
<protein>
    <recommendedName>
        <fullName evidence="1">Phosphatidylserine decarboxylase proenzyme</fullName>
        <ecNumber evidence="1">4.1.1.65</ecNumber>
    </recommendedName>
    <component>
        <recommendedName>
            <fullName evidence="1">Phosphatidylserine decarboxylase alpha chain</fullName>
        </recommendedName>
    </component>
    <component>
        <recommendedName>
            <fullName evidence="1">Phosphatidylserine decarboxylase beta chain</fullName>
        </recommendedName>
    </component>
</protein>
<accession>B3QCT3</accession>
<keyword id="KW-1003">Cell membrane</keyword>
<keyword id="KW-0210">Decarboxylase</keyword>
<keyword id="KW-0444">Lipid biosynthesis</keyword>
<keyword id="KW-0443">Lipid metabolism</keyword>
<keyword id="KW-0456">Lyase</keyword>
<keyword id="KW-0472">Membrane</keyword>
<keyword id="KW-0594">Phospholipid biosynthesis</keyword>
<keyword id="KW-1208">Phospholipid metabolism</keyword>
<keyword id="KW-0670">Pyruvate</keyword>
<keyword id="KW-0865">Zymogen</keyword>
<proteinExistence type="inferred from homology"/>
<comment type="function">
    <text evidence="1">Catalyzes the formation of phosphatidylethanolamine (PtdEtn) from phosphatidylserine (PtdSer).</text>
</comment>
<comment type="catalytic activity">
    <reaction evidence="1">
        <text>a 1,2-diacyl-sn-glycero-3-phospho-L-serine + H(+) = a 1,2-diacyl-sn-glycero-3-phosphoethanolamine + CO2</text>
        <dbReference type="Rhea" id="RHEA:20828"/>
        <dbReference type="ChEBI" id="CHEBI:15378"/>
        <dbReference type="ChEBI" id="CHEBI:16526"/>
        <dbReference type="ChEBI" id="CHEBI:57262"/>
        <dbReference type="ChEBI" id="CHEBI:64612"/>
        <dbReference type="EC" id="4.1.1.65"/>
    </reaction>
</comment>
<comment type="cofactor">
    <cofactor evidence="1">
        <name>pyruvate</name>
        <dbReference type="ChEBI" id="CHEBI:15361"/>
    </cofactor>
    <text evidence="1">Binds 1 pyruvoyl group covalently per subunit.</text>
</comment>
<comment type="pathway">
    <text evidence="1">Phospholipid metabolism; phosphatidylethanolamine biosynthesis; phosphatidylethanolamine from CDP-diacylglycerol: step 2/2.</text>
</comment>
<comment type="subunit">
    <text evidence="1">Heterodimer of a large membrane-associated beta subunit and a small pyruvoyl-containing alpha subunit.</text>
</comment>
<comment type="subcellular location">
    <subcellularLocation>
        <location evidence="1">Cell membrane</location>
        <topology evidence="1">Peripheral membrane protein</topology>
    </subcellularLocation>
</comment>
<comment type="PTM">
    <text evidence="1">Is synthesized initially as an inactive proenzyme. Formation of the active enzyme involves a self-maturation process in which the active site pyruvoyl group is generated from an internal serine residue via an autocatalytic post-translational modification. Two non-identical subunits are generated from the proenzyme in this reaction, and the pyruvate is formed at the N-terminus of the alpha chain, which is derived from the carboxyl end of the proenzyme. The post-translation cleavage follows an unusual pathway, termed non-hydrolytic serinolysis, in which the side chain hydroxyl group of the serine supplies its oxygen atom to form the C-terminus of the beta chain, while the remainder of the serine residue undergoes an oxidative deamination to produce ammonia and the pyruvoyl prosthetic group on the alpha chain.</text>
</comment>
<comment type="similarity">
    <text evidence="1">Belongs to the phosphatidylserine decarboxylase family. PSD-A subfamily.</text>
</comment>
<organism>
    <name type="scientific">Rhodopseudomonas palustris (strain TIE-1)</name>
    <dbReference type="NCBI Taxonomy" id="395960"/>
    <lineage>
        <taxon>Bacteria</taxon>
        <taxon>Pseudomonadati</taxon>
        <taxon>Pseudomonadota</taxon>
        <taxon>Alphaproteobacteria</taxon>
        <taxon>Hyphomicrobiales</taxon>
        <taxon>Nitrobacteraceae</taxon>
        <taxon>Rhodopseudomonas</taxon>
    </lineage>
</organism>
<evidence type="ECO:0000255" key="1">
    <source>
        <dbReference type="HAMAP-Rule" id="MF_00664"/>
    </source>
</evidence>
<gene>
    <name evidence="1" type="primary">psd</name>
    <name type="ordered locus">Rpal_2217</name>
</gene>
<sequence>MSIVNSVRAQIPPIHREGYPFVGGFALVTLILFWIWSPLGWIGTVLTIWCAYFFRNPARTTPVRDGLVVSPADGRVSMVVDIIPPPELGLGAKPLPRVSIFMSVFNCHVNRSPVAGRIERIVYSPGKFINAELDKASEDNERNSMVLSTEHGQIGVIQIAGLIARRIVSFVREGQPLVAGERFGLIRFGSRLDVYLPEGTKPLVAEGQTAIAGETILADLKGGDAGRIYRTD</sequence>
<reference key="1">
    <citation type="submission" date="2008-05" db="EMBL/GenBank/DDBJ databases">
        <title>Complete sequence of Rhodopseudomonas palustris TIE-1.</title>
        <authorList>
            <consortium name="US DOE Joint Genome Institute"/>
            <person name="Lucas S."/>
            <person name="Copeland A."/>
            <person name="Lapidus A."/>
            <person name="Glavina del Rio T."/>
            <person name="Dalin E."/>
            <person name="Tice H."/>
            <person name="Pitluck S."/>
            <person name="Chain P."/>
            <person name="Malfatti S."/>
            <person name="Shin M."/>
            <person name="Vergez L."/>
            <person name="Lang D."/>
            <person name="Schmutz J."/>
            <person name="Larimer F."/>
            <person name="Land M."/>
            <person name="Hauser L."/>
            <person name="Kyrpides N."/>
            <person name="Mikhailova N."/>
            <person name="Emerson D."/>
            <person name="Newman D.K."/>
            <person name="Roden E."/>
            <person name="Richardson P."/>
        </authorList>
    </citation>
    <scope>NUCLEOTIDE SEQUENCE [LARGE SCALE GENOMIC DNA]</scope>
    <source>
        <strain>TIE-1</strain>
    </source>
</reference>
<name>PSD_RHOPT</name>